<dbReference type="EMBL" id="AL035678">
    <property type="protein sequence ID" value="CAB38797.1"/>
    <property type="molecule type" value="Genomic_DNA"/>
</dbReference>
<dbReference type="EMBL" id="AL161583">
    <property type="protein sequence ID" value="CAB80056.1"/>
    <property type="molecule type" value="Genomic_DNA"/>
</dbReference>
<dbReference type="EMBL" id="CP002687">
    <property type="protein sequence ID" value="AEE86219.1"/>
    <property type="molecule type" value="Genomic_DNA"/>
</dbReference>
<dbReference type="EMBL" id="DQ446890">
    <property type="protein sequence ID" value="ABE66107.1"/>
    <property type="molecule type" value="mRNA"/>
</dbReference>
<dbReference type="PIR" id="T05990">
    <property type="entry name" value="T05990"/>
</dbReference>
<dbReference type="RefSeq" id="NP_195065.1">
    <property type="nucleotide sequence ID" value="NM_119493.3"/>
</dbReference>
<dbReference type="SMR" id="Q9SZB6"/>
<dbReference type="STRING" id="3702.Q9SZB6"/>
<dbReference type="iPTMnet" id="Q9SZB6"/>
<dbReference type="PaxDb" id="3702-AT4G33390.1"/>
<dbReference type="ProteomicsDB" id="242464"/>
<dbReference type="EnsemblPlants" id="AT4G33390.1">
    <property type="protein sequence ID" value="AT4G33390.1"/>
    <property type="gene ID" value="AT4G33390"/>
</dbReference>
<dbReference type="GeneID" id="829476"/>
<dbReference type="Gramene" id="AT4G33390.1">
    <property type="protein sequence ID" value="AT4G33390.1"/>
    <property type="gene ID" value="AT4G33390"/>
</dbReference>
<dbReference type="KEGG" id="ath:AT4G33390"/>
<dbReference type="Araport" id="AT4G33390"/>
<dbReference type="TAIR" id="AT4G33390"/>
<dbReference type="eggNOG" id="ENOG502QQFI">
    <property type="taxonomic scope" value="Eukaryota"/>
</dbReference>
<dbReference type="HOGENOM" id="CLU_008410_1_1_1"/>
<dbReference type="InParanoid" id="Q9SZB6"/>
<dbReference type="OMA" id="QETHRWE"/>
<dbReference type="PhylomeDB" id="Q9SZB6"/>
<dbReference type="PRO" id="PR:Q9SZB6"/>
<dbReference type="Proteomes" id="UP000006548">
    <property type="component" value="Chromosome 4"/>
</dbReference>
<dbReference type="ExpressionAtlas" id="Q9SZB6">
    <property type="expression patterns" value="baseline and differential"/>
</dbReference>
<dbReference type="InterPro" id="IPR008545">
    <property type="entry name" value="Web"/>
</dbReference>
<dbReference type="PANTHER" id="PTHR32054">
    <property type="entry name" value="HEAVY CHAIN, PUTATIVE, EXPRESSED-RELATED-RELATED"/>
    <property type="match status" value="1"/>
</dbReference>
<dbReference type="PANTHER" id="PTHR32054:SF25">
    <property type="entry name" value="PROTEIN WEAK CHLOROPLAST MOVEMENT UNDER BLUE LIGHT-LIKE 1"/>
    <property type="match status" value="1"/>
</dbReference>
<dbReference type="Pfam" id="PF05701">
    <property type="entry name" value="WEMBL"/>
    <property type="match status" value="1"/>
</dbReference>
<accession>Q9SZB6</accession>
<proteinExistence type="evidence at transcript level"/>
<organism>
    <name type="scientific">Arabidopsis thaliana</name>
    <name type="common">Mouse-ear cress</name>
    <dbReference type="NCBI Taxonomy" id="3702"/>
    <lineage>
        <taxon>Eukaryota</taxon>
        <taxon>Viridiplantae</taxon>
        <taxon>Streptophyta</taxon>
        <taxon>Embryophyta</taxon>
        <taxon>Tracheophyta</taxon>
        <taxon>Spermatophyta</taxon>
        <taxon>Magnoliopsida</taxon>
        <taxon>eudicotyledons</taxon>
        <taxon>Gunneridae</taxon>
        <taxon>Pentapetalae</taxon>
        <taxon>rosids</taxon>
        <taxon>malvids</taxon>
        <taxon>Brassicales</taxon>
        <taxon>Brassicaceae</taxon>
        <taxon>Camelineae</taxon>
        <taxon>Arabidopsis</taxon>
    </lineage>
</organism>
<protein>
    <recommendedName>
        <fullName>Protein WEAK CHLOROPLAST MOVEMENT UNDER BLUE LIGHT-like 1</fullName>
        <shortName>Protein WEL1</shortName>
    </recommendedName>
</protein>
<sequence>MEDLKTTDALSLPVVSDNGGIIEPELQLPQAIPTELENNEEENGTIQQSQSEEDSAENGKIYMDDTFLPSKSQVKETQDSPTTPSFVSPSAEIVLPRVNTKYEAEGTTRNAVSPRPLYSPRSIGSPRALLSPRFAGSSSPLSNGTPISMDSFRDSIDTASPFESVKEAVSKFGGITDWKAHRMKVLERRNFVEQELDKIQEEIPEYKKKSEMVEMSKMLAVEELESTKRLIEELKLNLEKAETEEQQAKQDSELAKLRVQEMEQGIADEASVASKAQLEVAQARHTSAISELESVKEELQTLQNEYDALVKEKDLAVKEAEEAVIASKEVERKVEELTIELIATKESLECAHSSHLEAEEHRIGAAMLRDQETHRWEKELKQAEEELQRLKQHLVSTKELQVKLEFASALLLDLKKELADHKESSKVKEETSETVVTNIEISLQEKTTDIQKAVASAKKELEEVNANVEKATSEVNCLKVASSSLRLEIDKEKSALDSLKQREGMASVTVASLEAEIDITRCEIALVKSKEKETREEMVELPKQLQQASQEADEAKSFAELAREELRKSQEEAEQAKAGASTMESRLFAAQKEIEAIKASERLALAAIKALQESESSSKENAVDSPRTVTLTIEEYYELSKRAHEAEEAANARVAAAVSEVGEAKETEKRSLEKLEEVNKEMVERKATLAGAMEKAEKAKEGKLGVEQELRKWREVSEKKRKNGSSHGKSIQGSKEKEAETSVSNETETNPIPQVNPVKKKKKLFPRFFMFLMKKKSHK</sequence>
<name>WEL1_ARATH</name>
<feature type="chain" id="PRO_0000414039" description="Protein WEAK CHLOROPLAST MOVEMENT UNDER BLUE LIGHT-like 1">
    <location>
        <begin position="1"/>
        <end position="779"/>
    </location>
</feature>
<feature type="region of interest" description="Disordered" evidence="3">
    <location>
        <begin position="1"/>
        <end position="119"/>
    </location>
</feature>
<feature type="region of interest" description="Disordered" evidence="3">
    <location>
        <begin position="650"/>
        <end position="674"/>
    </location>
</feature>
<feature type="region of interest" description="Disordered" evidence="3">
    <location>
        <begin position="694"/>
        <end position="759"/>
    </location>
</feature>
<feature type="coiled-coil region" evidence="2">
    <location>
        <begin position="182"/>
        <end position="503"/>
    </location>
</feature>
<feature type="coiled-coil region" evidence="2">
    <location>
        <begin position="532"/>
        <end position="587"/>
    </location>
</feature>
<feature type="coiled-coil region" evidence="2">
    <location>
        <begin position="657"/>
        <end position="715"/>
    </location>
</feature>
<feature type="compositionally biased region" description="Polar residues" evidence="3">
    <location>
        <begin position="79"/>
        <end position="88"/>
    </location>
</feature>
<feature type="compositionally biased region" description="Low complexity" evidence="3">
    <location>
        <begin position="650"/>
        <end position="661"/>
    </location>
</feature>
<feature type="compositionally biased region" description="Basic and acidic residues" evidence="3">
    <location>
        <begin position="662"/>
        <end position="674"/>
    </location>
</feature>
<feature type="compositionally biased region" description="Basic and acidic residues" evidence="3">
    <location>
        <begin position="694"/>
        <end position="718"/>
    </location>
</feature>
<feature type="compositionally biased region" description="Polar residues" evidence="3">
    <location>
        <begin position="741"/>
        <end position="753"/>
    </location>
</feature>
<feature type="modified residue" description="Phosphoserine" evidence="1">
    <location>
        <position position="139"/>
    </location>
</feature>
<evidence type="ECO:0000250" key="1">
    <source>
        <dbReference type="UniProtKB" id="O48724"/>
    </source>
</evidence>
<evidence type="ECO:0000255" key="2"/>
<evidence type="ECO:0000256" key="3">
    <source>
        <dbReference type="SAM" id="MobiDB-lite"/>
    </source>
</evidence>
<evidence type="ECO:0000305" key="4"/>
<gene>
    <name type="primary">WEL1</name>
    <name type="ordered locus">At4g33390</name>
    <name type="ORF">F17M5.150</name>
</gene>
<reference key="1">
    <citation type="journal article" date="1999" name="Nature">
        <title>Sequence and analysis of chromosome 4 of the plant Arabidopsis thaliana.</title>
        <authorList>
            <person name="Mayer K.F.X."/>
            <person name="Schueller C."/>
            <person name="Wambutt R."/>
            <person name="Murphy G."/>
            <person name="Volckaert G."/>
            <person name="Pohl T."/>
            <person name="Duesterhoeft A."/>
            <person name="Stiekema W."/>
            <person name="Entian K.-D."/>
            <person name="Terryn N."/>
            <person name="Harris B."/>
            <person name="Ansorge W."/>
            <person name="Brandt P."/>
            <person name="Grivell L.A."/>
            <person name="Rieger M."/>
            <person name="Weichselgartner M."/>
            <person name="de Simone V."/>
            <person name="Obermaier B."/>
            <person name="Mache R."/>
            <person name="Mueller M."/>
            <person name="Kreis M."/>
            <person name="Delseny M."/>
            <person name="Puigdomenech P."/>
            <person name="Watson M."/>
            <person name="Schmidtheini T."/>
            <person name="Reichert B."/>
            <person name="Portetelle D."/>
            <person name="Perez-Alonso M."/>
            <person name="Boutry M."/>
            <person name="Bancroft I."/>
            <person name="Vos P."/>
            <person name="Hoheisel J."/>
            <person name="Zimmermann W."/>
            <person name="Wedler H."/>
            <person name="Ridley P."/>
            <person name="Langham S.-A."/>
            <person name="McCullagh B."/>
            <person name="Bilham L."/>
            <person name="Robben J."/>
            <person name="van der Schueren J."/>
            <person name="Grymonprez B."/>
            <person name="Chuang Y.-J."/>
            <person name="Vandenbussche F."/>
            <person name="Braeken M."/>
            <person name="Weltjens I."/>
            <person name="Voet M."/>
            <person name="Bastiaens I."/>
            <person name="Aert R."/>
            <person name="Defoor E."/>
            <person name="Weitzenegger T."/>
            <person name="Bothe G."/>
            <person name="Ramsperger U."/>
            <person name="Hilbert H."/>
            <person name="Braun M."/>
            <person name="Holzer E."/>
            <person name="Brandt A."/>
            <person name="Peters S."/>
            <person name="van Staveren M."/>
            <person name="Dirkse W."/>
            <person name="Mooijman P."/>
            <person name="Klein Lankhorst R."/>
            <person name="Rose M."/>
            <person name="Hauf J."/>
            <person name="Koetter P."/>
            <person name="Berneiser S."/>
            <person name="Hempel S."/>
            <person name="Feldpausch M."/>
            <person name="Lamberth S."/>
            <person name="Van den Daele H."/>
            <person name="De Keyser A."/>
            <person name="Buysshaert C."/>
            <person name="Gielen J."/>
            <person name="Villarroel R."/>
            <person name="De Clercq R."/>
            <person name="van Montagu M."/>
            <person name="Rogers J."/>
            <person name="Cronin A."/>
            <person name="Quail M.A."/>
            <person name="Bray-Allen S."/>
            <person name="Clark L."/>
            <person name="Doggett J."/>
            <person name="Hall S."/>
            <person name="Kay M."/>
            <person name="Lennard N."/>
            <person name="McLay K."/>
            <person name="Mayes R."/>
            <person name="Pettett A."/>
            <person name="Rajandream M.A."/>
            <person name="Lyne M."/>
            <person name="Benes V."/>
            <person name="Rechmann S."/>
            <person name="Borkova D."/>
            <person name="Bloecker H."/>
            <person name="Scharfe M."/>
            <person name="Grimm M."/>
            <person name="Loehnert T.-H."/>
            <person name="Dose S."/>
            <person name="de Haan M."/>
            <person name="Maarse A.C."/>
            <person name="Schaefer M."/>
            <person name="Mueller-Auer S."/>
            <person name="Gabel C."/>
            <person name="Fuchs M."/>
            <person name="Fartmann B."/>
            <person name="Granderath K."/>
            <person name="Dauner D."/>
            <person name="Herzl A."/>
            <person name="Neumann S."/>
            <person name="Argiriou A."/>
            <person name="Vitale D."/>
            <person name="Liguori R."/>
            <person name="Piravandi E."/>
            <person name="Massenet O."/>
            <person name="Quigley F."/>
            <person name="Clabauld G."/>
            <person name="Muendlein A."/>
            <person name="Felber R."/>
            <person name="Schnabl S."/>
            <person name="Hiller R."/>
            <person name="Schmidt W."/>
            <person name="Lecharny A."/>
            <person name="Aubourg S."/>
            <person name="Chefdor F."/>
            <person name="Cooke R."/>
            <person name="Berger C."/>
            <person name="Monfort A."/>
            <person name="Casacuberta E."/>
            <person name="Gibbons T."/>
            <person name="Weber N."/>
            <person name="Vandenbol M."/>
            <person name="Bargues M."/>
            <person name="Terol J."/>
            <person name="Torres A."/>
            <person name="Perez-Perez A."/>
            <person name="Purnelle B."/>
            <person name="Bent E."/>
            <person name="Johnson S."/>
            <person name="Tacon D."/>
            <person name="Jesse T."/>
            <person name="Heijnen L."/>
            <person name="Schwarz S."/>
            <person name="Scholler P."/>
            <person name="Heber S."/>
            <person name="Francs P."/>
            <person name="Bielke C."/>
            <person name="Frishman D."/>
            <person name="Haase D."/>
            <person name="Lemcke K."/>
            <person name="Mewes H.-W."/>
            <person name="Stocker S."/>
            <person name="Zaccaria P."/>
            <person name="Bevan M."/>
            <person name="Wilson R.K."/>
            <person name="de la Bastide M."/>
            <person name="Habermann K."/>
            <person name="Parnell L."/>
            <person name="Dedhia N."/>
            <person name="Gnoj L."/>
            <person name="Schutz K."/>
            <person name="Huang E."/>
            <person name="Spiegel L."/>
            <person name="Sekhon M."/>
            <person name="Murray J."/>
            <person name="Sheet P."/>
            <person name="Cordes M."/>
            <person name="Abu-Threideh J."/>
            <person name="Stoneking T."/>
            <person name="Kalicki J."/>
            <person name="Graves T."/>
            <person name="Harmon G."/>
            <person name="Edwards J."/>
            <person name="Latreille P."/>
            <person name="Courtney L."/>
            <person name="Cloud J."/>
            <person name="Abbott A."/>
            <person name="Scott K."/>
            <person name="Johnson D."/>
            <person name="Minx P."/>
            <person name="Bentley D."/>
            <person name="Fulton B."/>
            <person name="Miller N."/>
            <person name="Greco T."/>
            <person name="Kemp K."/>
            <person name="Kramer J."/>
            <person name="Fulton L."/>
            <person name="Mardis E."/>
            <person name="Dante M."/>
            <person name="Pepin K."/>
            <person name="Hillier L.W."/>
            <person name="Nelson J."/>
            <person name="Spieth J."/>
            <person name="Ryan E."/>
            <person name="Andrews S."/>
            <person name="Geisel C."/>
            <person name="Layman D."/>
            <person name="Du H."/>
            <person name="Ali J."/>
            <person name="Berghoff A."/>
            <person name="Jones K."/>
            <person name="Drone K."/>
            <person name="Cotton M."/>
            <person name="Joshu C."/>
            <person name="Antonoiu B."/>
            <person name="Zidanic M."/>
            <person name="Strong C."/>
            <person name="Sun H."/>
            <person name="Lamar B."/>
            <person name="Yordan C."/>
            <person name="Ma P."/>
            <person name="Zhong J."/>
            <person name="Preston R."/>
            <person name="Vil D."/>
            <person name="Shekher M."/>
            <person name="Matero A."/>
            <person name="Shah R."/>
            <person name="Swaby I.K."/>
            <person name="O'Shaughnessy A."/>
            <person name="Rodriguez M."/>
            <person name="Hoffman J."/>
            <person name="Till S."/>
            <person name="Granat S."/>
            <person name="Shohdy N."/>
            <person name="Hasegawa A."/>
            <person name="Hameed A."/>
            <person name="Lodhi M."/>
            <person name="Johnson A."/>
            <person name="Chen E."/>
            <person name="Marra M.A."/>
            <person name="Martienssen R."/>
            <person name="McCombie W.R."/>
        </authorList>
    </citation>
    <scope>NUCLEOTIDE SEQUENCE [LARGE SCALE GENOMIC DNA]</scope>
    <source>
        <strain>cv. Columbia</strain>
    </source>
</reference>
<reference key="2">
    <citation type="journal article" date="2017" name="Plant J.">
        <title>Araport11: a complete reannotation of the Arabidopsis thaliana reference genome.</title>
        <authorList>
            <person name="Cheng C.Y."/>
            <person name="Krishnakumar V."/>
            <person name="Chan A.P."/>
            <person name="Thibaud-Nissen F."/>
            <person name="Schobel S."/>
            <person name="Town C.D."/>
        </authorList>
    </citation>
    <scope>GENOME REANNOTATION</scope>
    <source>
        <strain>cv. Columbia</strain>
    </source>
</reference>
<reference key="3">
    <citation type="journal article" date="2006" name="Plant Biotechnol. J.">
        <title>Simultaneous high-throughput recombinational cloning of open reading frames in closed and open configurations.</title>
        <authorList>
            <person name="Underwood B.A."/>
            <person name="Vanderhaeghen R."/>
            <person name="Whitford R."/>
            <person name="Town C.D."/>
            <person name="Hilson P."/>
        </authorList>
    </citation>
    <scope>NUCLEOTIDE SEQUENCE [LARGE SCALE MRNA]</scope>
    <source>
        <strain>cv. Columbia</strain>
    </source>
</reference>
<reference key="4">
    <citation type="journal article" date="2010" name="Proc. Natl. Acad. Sci. U.S.A.">
        <title>Two interacting coiled-coil proteins, WEB1 and PMI2, maintain the chloroplast photorelocation movement velocity in Arabidopsis.</title>
        <authorList>
            <person name="Kodama Y."/>
            <person name="Suetsugu N."/>
            <person name="Kong S.G."/>
            <person name="Wada M."/>
        </authorList>
    </citation>
    <scope>GENE FAMILY</scope>
</reference>
<keyword id="KW-0175">Coiled coil</keyword>
<keyword id="KW-0597">Phosphoprotein</keyword>
<keyword id="KW-1185">Reference proteome</keyword>
<comment type="similarity">
    <text evidence="4">Belongs to the WEB family.</text>
</comment>